<keyword id="KW-0932">Cytokinin signaling pathway</keyword>
<keyword id="KW-0539">Nucleus</keyword>
<keyword id="KW-0597">Phosphoprotein</keyword>
<keyword id="KW-1185">Reference proteome</keyword>
<keyword id="KW-0804">Transcription</keyword>
<keyword id="KW-0805">Transcription regulation</keyword>
<keyword id="KW-0902">Two-component regulatory system</keyword>
<dbReference type="EMBL" id="AC016829">
    <property type="protein sequence ID" value="AAF26786.1"/>
    <property type="molecule type" value="Genomic_DNA"/>
</dbReference>
<dbReference type="EMBL" id="CP002686">
    <property type="protein sequence ID" value="AEE74060.1"/>
    <property type="molecule type" value="Genomic_DNA"/>
</dbReference>
<dbReference type="EMBL" id="CP002686">
    <property type="protein sequence ID" value="AEE74061.1"/>
    <property type="molecule type" value="Genomic_DNA"/>
</dbReference>
<dbReference type="EMBL" id="CP002686">
    <property type="protein sequence ID" value="AEE74062.1"/>
    <property type="molecule type" value="Genomic_DNA"/>
</dbReference>
<dbReference type="EMBL" id="AY085638">
    <property type="protein sequence ID" value="AAM62859.1"/>
    <property type="molecule type" value="mRNA"/>
</dbReference>
<dbReference type="RefSeq" id="NP_001078102.1">
    <property type="nucleotide sequence ID" value="NM_001084633.1"/>
</dbReference>
<dbReference type="RefSeq" id="NP_187078.1">
    <property type="nucleotide sequence ID" value="NM_111299.3"/>
</dbReference>
<dbReference type="RefSeq" id="NP_850511.1">
    <property type="nucleotide sequence ID" value="NM_180180.3"/>
</dbReference>
<dbReference type="SMR" id="Q9M8Y4"/>
<dbReference type="BioGRID" id="4918">
    <property type="interactions" value="3"/>
</dbReference>
<dbReference type="FunCoup" id="Q9M8Y4">
    <property type="interactions" value="45"/>
</dbReference>
<dbReference type="STRING" id="3702.Q9M8Y4"/>
<dbReference type="PaxDb" id="3702-AT3G04280.1"/>
<dbReference type="ProteomicsDB" id="246899"/>
<dbReference type="EnsemblPlants" id="AT3G04280.1">
    <property type="protein sequence ID" value="AT3G04280.1"/>
    <property type="gene ID" value="AT3G04280"/>
</dbReference>
<dbReference type="EnsemblPlants" id="AT3G04280.2">
    <property type="protein sequence ID" value="AT3G04280.2"/>
    <property type="gene ID" value="AT3G04280"/>
</dbReference>
<dbReference type="EnsemblPlants" id="AT3G04280.3">
    <property type="protein sequence ID" value="AT3G04280.3"/>
    <property type="gene ID" value="AT3G04280"/>
</dbReference>
<dbReference type="GeneID" id="819583"/>
<dbReference type="Gramene" id="AT3G04280.1">
    <property type="protein sequence ID" value="AT3G04280.1"/>
    <property type="gene ID" value="AT3G04280"/>
</dbReference>
<dbReference type="Gramene" id="AT3G04280.2">
    <property type="protein sequence ID" value="AT3G04280.2"/>
    <property type="gene ID" value="AT3G04280"/>
</dbReference>
<dbReference type="Gramene" id="AT3G04280.3">
    <property type="protein sequence ID" value="AT3G04280.3"/>
    <property type="gene ID" value="AT3G04280"/>
</dbReference>
<dbReference type="KEGG" id="ath:AT3G04280"/>
<dbReference type="Araport" id="AT3G04280"/>
<dbReference type="TAIR" id="AT3G04280">
    <property type="gene designation" value="RR22"/>
</dbReference>
<dbReference type="eggNOG" id="KOG0519">
    <property type="taxonomic scope" value="Eukaryota"/>
</dbReference>
<dbReference type="HOGENOM" id="CLU_000445_69_12_1"/>
<dbReference type="InParanoid" id="Q9M8Y4"/>
<dbReference type="OMA" id="LGMETHE"/>
<dbReference type="OrthoDB" id="21225at2759"/>
<dbReference type="PhylomeDB" id="Q9M8Y4"/>
<dbReference type="PRO" id="PR:Q9M8Y4"/>
<dbReference type="Proteomes" id="UP000006548">
    <property type="component" value="Chromosome 3"/>
</dbReference>
<dbReference type="ExpressionAtlas" id="Q9M8Y4">
    <property type="expression patterns" value="baseline and differential"/>
</dbReference>
<dbReference type="GO" id="GO:0005737">
    <property type="term" value="C:cytoplasm"/>
    <property type="evidence" value="ECO:0000314"/>
    <property type="project" value="TAIR"/>
</dbReference>
<dbReference type="GO" id="GO:0005634">
    <property type="term" value="C:nucleus"/>
    <property type="evidence" value="ECO:0000314"/>
    <property type="project" value="TAIR"/>
</dbReference>
<dbReference type="GO" id="GO:0000156">
    <property type="term" value="F:phosphorelay response regulator activity"/>
    <property type="evidence" value="ECO:0000250"/>
    <property type="project" value="TAIR"/>
</dbReference>
<dbReference type="GO" id="GO:0101006">
    <property type="term" value="F:protein histidine phosphatase activity"/>
    <property type="evidence" value="ECO:0000314"/>
    <property type="project" value="TAIR"/>
</dbReference>
<dbReference type="GO" id="GO:0009736">
    <property type="term" value="P:cytokinin-activated signaling pathway"/>
    <property type="evidence" value="ECO:0000315"/>
    <property type="project" value="TAIR"/>
</dbReference>
<dbReference type="GO" id="GO:0000160">
    <property type="term" value="P:phosphorelay signal transduction system"/>
    <property type="evidence" value="ECO:0000305"/>
    <property type="project" value="TAIR"/>
</dbReference>
<dbReference type="GO" id="GO:0006355">
    <property type="term" value="P:regulation of DNA-templated transcription"/>
    <property type="evidence" value="ECO:0000304"/>
    <property type="project" value="TAIR"/>
</dbReference>
<dbReference type="CDD" id="cd17546">
    <property type="entry name" value="REC_hyHK_CKI1_RcsC-like"/>
    <property type="match status" value="1"/>
</dbReference>
<dbReference type="FunFam" id="3.40.50.2300:FF:000770">
    <property type="match status" value="1"/>
</dbReference>
<dbReference type="Gene3D" id="3.40.50.2300">
    <property type="match status" value="1"/>
</dbReference>
<dbReference type="InterPro" id="IPR011006">
    <property type="entry name" value="CheY-like_superfamily"/>
</dbReference>
<dbReference type="InterPro" id="IPR001789">
    <property type="entry name" value="Sig_transdc_resp-reg_receiver"/>
</dbReference>
<dbReference type="InterPro" id="IPR052048">
    <property type="entry name" value="ST_Response_Regulator"/>
</dbReference>
<dbReference type="PANTHER" id="PTHR43228">
    <property type="entry name" value="TWO-COMPONENT RESPONSE REGULATOR"/>
    <property type="match status" value="1"/>
</dbReference>
<dbReference type="PANTHER" id="PTHR43228:SF1">
    <property type="entry name" value="TWO-COMPONENT RESPONSE REGULATOR ARR22"/>
    <property type="match status" value="1"/>
</dbReference>
<dbReference type="Pfam" id="PF00072">
    <property type="entry name" value="Response_reg"/>
    <property type="match status" value="1"/>
</dbReference>
<dbReference type="SMART" id="SM00448">
    <property type="entry name" value="REC"/>
    <property type="match status" value="1"/>
</dbReference>
<dbReference type="SUPFAM" id="SSF52172">
    <property type="entry name" value="CheY-like"/>
    <property type="match status" value="1"/>
</dbReference>
<dbReference type="PROSITE" id="PS50110">
    <property type="entry name" value="RESPONSE_REGULATORY"/>
    <property type="match status" value="1"/>
</dbReference>
<name>ARR22_ARATH</name>
<feature type="chain" id="PRO_0000081434" description="Two-component response regulator ARR22">
    <location>
        <begin position="1"/>
        <end position="142"/>
    </location>
</feature>
<feature type="domain" description="Response regulatory" evidence="2">
    <location>
        <begin position="23"/>
        <end position="140"/>
    </location>
</feature>
<feature type="modified residue" description="4-aspartylphosphate" evidence="2">
    <location>
        <position position="74"/>
    </location>
</feature>
<accession>Q9M8Y4</accession>
<protein>
    <recommendedName>
        <fullName>Two-component response regulator ARR22</fullName>
    </recommendedName>
</protein>
<reference key="1">
    <citation type="journal article" date="2000" name="Nature">
        <title>Sequence and analysis of chromosome 3 of the plant Arabidopsis thaliana.</title>
        <authorList>
            <person name="Salanoubat M."/>
            <person name="Lemcke K."/>
            <person name="Rieger M."/>
            <person name="Ansorge W."/>
            <person name="Unseld M."/>
            <person name="Fartmann B."/>
            <person name="Valle G."/>
            <person name="Bloecker H."/>
            <person name="Perez-Alonso M."/>
            <person name="Obermaier B."/>
            <person name="Delseny M."/>
            <person name="Boutry M."/>
            <person name="Grivell L.A."/>
            <person name="Mache R."/>
            <person name="Puigdomenech P."/>
            <person name="De Simone V."/>
            <person name="Choisne N."/>
            <person name="Artiguenave F."/>
            <person name="Robert C."/>
            <person name="Brottier P."/>
            <person name="Wincker P."/>
            <person name="Cattolico L."/>
            <person name="Weissenbach J."/>
            <person name="Saurin W."/>
            <person name="Quetier F."/>
            <person name="Schaefer M."/>
            <person name="Mueller-Auer S."/>
            <person name="Gabel C."/>
            <person name="Fuchs M."/>
            <person name="Benes V."/>
            <person name="Wurmbach E."/>
            <person name="Drzonek H."/>
            <person name="Erfle H."/>
            <person name="Jordan N."/>
            <person name="Bangert S."/>
            <person name="Wiedelmann R."/>
            <person name="Kranz H."/>
            <person name="Voss H."/>
            <person name="Holland R."/>
            <person name="Brandt P."/>
            <person name="Nyakatura G."/>
            <person name="Vezzi A."/>
            <person name="D'Angelo M."/>
            <person name="Pallavicini A."/>
            <person name="Toppo S."/>
            <person name="Simionati B."/>
            <person name="Conrad A."/>
            <person name="Hornischer K."/>
            <person name="Kauer G."/>
            <person name="Loehnert T.-H."/>
            <person name="Nordsiek G."/>
            <person name="Reichelt J."/>
            <person name="Scharfe M."/>
            <person name="Schoen O."/>
            <person name="Bargues M."/>
            <person name="Terol J."/>
            <person name="Climent J."/>
            <person name="Navarro P."/>
            <person name="Collado C."/>
            <person name="Perez-Perez A."/>
            <person name="Ottenwaelder B."/>
            <person name="Duchemin D."/>
            <person name="Cooke R."/>
            <person name="Laudie M."/>
            <person name="Berger-Llauro C."/>
            <person name="Purnelle B."/>
            <person name="Masuy D."/>
            <person name="de Haan M."/>
            <person name="Maarse A.C."/>
            <person name="Alcaraz J.-P."/>
            <person name="Cottet A."/>
            <person name="Casacuberta E."/>
            <person name="Monfort A."/>
            <person name="Argiriou A."/>
            <person name="Flores M."/>
            <person name="Liguori R."/>
            <person name="Vitale D."/>
            <person name="Mannhaupt G."/>
            <person name="Haase D."/>
            <person name="Schoof H."/>
            <person name="Rudd S."/>
            <person name="Zaccaria P."/>
            <person name="Mewes H.-W."/>
            <person name="Mayer K.F.X."/>
            <person name="Kaul S."/>
            <person name="Town C.D."/>
            <person name="Koo H.L."/>
            <person name="Tallon L.J."/>
            <person name="Jenkins J."/>
            <person name="Rooney T."/>
            <person name="Rizzo M."/>
            <person name="Walts A."/>
            <person name="Utterback T."/>
            <person name="Fujii C.Y."/>
            <person name="Shea T.P."/>
            <person name="Creasy T.H."/>
            <person name="Haas B."/>
            <person name="Maiti R."/>
            <person name="Wu D."/>
            <person name="Peterson J."/>
            <person name="Van Aken S."/>
            <person name="Pai G."/>
            <person name="Militscher J."/>
            <person name="Sellers P."/>
            <person name="Gill J.E."/>
            <person name="Feldblyum T.V."/>
            <person name="Preuss D."/>
            <person name="Lin X."/>
            <person name="Nierman W.C."/>
            <person name="Salzberg S.L."/>
            <person name="White O."/>
            <person name="Venter J.C."/>
            <person name="Fraser C.M."/>
            <person name="Kaneko T."/>
            <person name="Nakamura Y."/>
            <person name="Sato S."/>
            <person name="Kato T."/>
            <person name="Asamizu E."/>
            <person name="Sasamoto S."/>
            <person name="Kimura T."/>
            <person name="Idesawa K."/>
            <person name="Kawashima K."/>
            <person name="Kishida Y."/>
            <person name="Kiyokawa C."/>
            <person name="Kohara M."/>
            <person name="Matsumoto M."/>
            <person name="Matsuno A."/>
            <person name="Muraki A."/>
            <person name="Nakayama S."/>
            <person name="Nakazaki N."/>
            <person name="Shinpo S."/>
            <person name="Takeuchi C."/>
            <person name="Wada T."/>
            <person name="Watanabe A."/>
            <person name="Yamada M."/>
            <person name="Yasuda M."/>
            <person name="Tabata S."/>
        </authorList>
    </citation>
    <scope>NUCLEOTIDE SEQUENCE [LARGE SCALE GENOMIC DNA]</scope>
    <source>
        <strain>cv. Columbia</strain>
    </source>
</reference>
<reference key="2">
    <citation type="journal article" date="2017" name="Plant J.">
        <title>Araport11: a complete reannotation of the Arabidopsis thaliana reference genome.</title>
        <authorList>
            <person name="Cheng C.Y."/>
            <person name="Krishnakumar V."/>
            <person name="Chan A.P."/>
            <person name="Thibaud-Nissen F."/>
            <person name="Schobel S."/>
            <person name="Town C.D."/>
        </authorList>
    </citation>
    <scope>GENOME REANNOTATION</scope>
    <source>
        <strain>cv. Columbia</strain>
    </source>
</reference>
<reference key="3">
    <citation type="submission" date="2002-03" db="EMBL/GenBank/DDBJ databases">
        <title>Full-length cDNA from Arabidopsis thaliana.</title>
        <authorList>
            <person name="Brover V.V."/>
            <person name="Troukhan M.E."/>
            <person name="Alexandrov N.A."/>
            <person name="Lu Y.-P."/>
            <person name="Flavell R.B."/>
            <person name="Feldmann K.A."/>
        </authorList>
    </citation>
    <scope>NUCLEOTIDE SEQUENCE [LARGE SCALE MRNA]</scope>
</reference>
<reference key="4">
    <citation type="journal article" date="2004" name="Plant Cell">
        <title>Type-A Arabidopsis response regulators are partially redundant negative regulators of cytokinin signaling.</title>
        <authorList>
            <person name="To J.P.C."/>
            <person name="Haberer G."/>
            <person name="Ferreira F.J."/>
            <person name="Deruere J."/>
            <person name="Mason M.G."/>
            <person name="Schaller G.E."/>
            <person name="Alonso J.M."/>
            <person name="Ecker J.R."/>
            <person name="Kieber J.J."/>
        </authorList>
    </citation>
    <scope>FUNCTION</scope>
</reference>
<sequence length="142" mass="15792">MATKSTGGTEKTKSIEVKKKLINVLIVDDDPLNRRLHEMIIKTIGGISQTAKNGEEAVILHRDGEASFDLILMDKEMPERDGVSTTKKLREMKVTSMIVGVTSVADQEEERKAFMEAGLNHCLEKPLTKAKIFPLISHLFDA</sequence>
<proteinExistence type="evidence at transcript level"/>
<gene>
    <name type="primary">ARR22</name>
    <name type="ordered locus">At3g04280</name>
    <name type="ORF">T6K12.10</name>
</gene>
<organism>
    <name type="scientific">Arabidopsis thaliana</name>
    <name type="common">Mouse-ear cress</name>
    <dbReference type="NCBI Taxonomy" id="3702"/>
    <lineage>
        <taxon>Eukaryota</taxon>
        <taxon>Viridiplantae</taxon>
        <taxon>Streptophyta</taxon>
        <taxon>Embryophyta</taxon>
        <taxon>Tracheophyta</taxon>
        <taxon>Spermatophyta</taxon>
        <taxon>Magnoliopsida</taxon>
        <taxon>eudicotyledons</taxon>
        <taxon>Gunneridae</taxon>
        <taxon>Pentapetalae</taxon>
        <taxon>rosids</taxon>
        <taxon>malvids</taxon>
        <taxon>Brassicales</taxon>
        <taxon>Brassicaceae</taxon>
        <taxon>Camelineae</taxon>
        <taxon>Arabidopsis</taxon>
    </lineage>
</organism>
<evidence type="ECO:0000250" key="1"/>
<evidence type="ECO:0000255" key="2">
    <source>
        <dbReference type="PROSITE-ProRule" id="PRU00169"/>
    </source>
</evidence>
<evidence type="ECO:0000269" key="3">
    <source>
    </source>
</evidence>
<evidence type="ECO:0000305" key="4"/>
<comment type="function">
    <text evidence="1 3">Functions as a response regulator involved in His-to-Asp phosphorelay signal transduction system. Phosphorylation of the Asp residue in the receiver domain activates the ability of the protein to promote the transcription of target genes. Type-A response regulators seem to act as negative regulators of the cytokinin signaling (By similarity).</text>
</comment>
<comment type="subcellular location">
    <subcellularLocation>
        <location evidence="4">Nucleus</location>
    </subcellularLocation>
</comment>
<comment type="PTM">
    <text>Two-component system major event consists of a His-to-Asp phosphorelay between a sensor histidine kinase (HK) and a response regulator (RR). In plants, the His-to-Asp phosphorelay involves an additional intermediate named Histidine-containing phosphotransfer protein (HPt). This multistep phosphorelay consists of a His-Asp-His-Asp sequential transfer of a phosphate group between first a His and an Asp of the HK protein, followed by the transfer to a conserved His of the HPt protein and finally the transfer to an Asp in the receiver domain of the RR protein.</text>
</comment>
<comment type="similarity">
    <text evidence="4">Belongs to the ARR family. Type-A subfamily.</text>
</comment>